<gene>
    <name type="primary">pyrD</name>
    <name type="ordered locus">BAMEG_0608</name>
</gene>
<accession>C3L742</accession>
<proteinExistence type="inferred from homology"/>
<feature type="chain" id="PRO_1000195040" description="Dihydroorotate dehydrogenase B (NAD(+)), catalytic subunit">
    <location>
        <begin position="1"/>
        <end position="309"/>
    </location>
</feature>
<feature type="active site" description="Nucleophile">
    <location>
        <position position="130"/>
    </location>
</feature>
<feature type="binding site" evidence="1">
    <location>
        <position position="21"/>
    </location>
    <ligand>
        <name>FMN</name>
        <dbReference type="ChEBI" id="CHEBI:58210"/>
    </ligand>
</feature>
<feature type="binding site" evidence="1">
    <location>
        <begin position="45"/>
        <end position="46"/>
    </location>
    <ligand>
        <name>FMN</name>
        <dbReference type="ChEBI" id="CHEBI:58210"/>
    </ligand>
</feature>
<feature type="binding site" evidence="1">
    <location>
        <position position="45"/>
    </location>
    <ligand>
        <name>substrate</name>
    </ligand>
</feature>
<feature type="binding site" evidence="1">
    <location>
        <begin position="69"/>
        <end position="73"/>
    </location>
    <ligand>
        <name>substrate</name>
    </ligand>
</feature>
<feature type="binding site" evidence="1">
    <location>
        <position position="99"/>
    </location>
    <ligand>
        <name>FMN</name>
        <dbReference type="ChEBI" id="CHEBI:58210"/>
    </ligand>
</feature>
<feature type="binding site" evidence="1">
    <location>
        <position position="127"/>
    </location>
    <ligand>
        <name>FMN</name>
        <dbReference type="ChEBI" id="CHEBI:58210"/>
    </ligand>
</feature>
<feature type="binding site" evidence="1">
    <location>
        <position position="127"/>
    </location>
    <ligand>
        <name>substrate</name>
    </ligand>
</feature>
<feature type="binding site" evidence="1">
    <location>
        <position position="165"/>
    </location>
    <ligand>
        <name>FMN</name>
        <dbReference type="ChEBI" id="CHEBI:58210"/>
    </ligand>
</feature>
<feature type="binding site" evidence="1">
    <location>
        <position position="191"/>
    </location>
    <ligand>
        <name>FMN</name>
        <dbReference type="ChEBI" id="CHEBI:58210"/>
    </ligand>
</feature>
<feature type="binding site" evidence="1">
    <location>
        <begin position="192"/>
        <end position="193"/>
    </location>
    <ligand>
        <name>substrate</name>
    </ligand>
</feature>
<feature type="binding site" evidence="1">
    <location>
        <position position="217"/>
    </location>
    <ligand>
        <name>FMN</name>
        <dbReference type="ChEBI" id="CHEBI:58210"/>
    </ligand>
</feature>
<feature type="binding site" evidence="1">
    <location>
        <begin position="243"/>
        <end position="244"/>
    </location>
    <ligand>
        <name>FMN</name>
        <dbReference type="ChEBI" id="CHEBI:58210"/>
    </ligand>
</feature>
<feature type="binding site" evidence="1">
    <location>
        <begin position="265"/>
        <end position="266"/>
    </location>
    <ligand>
        <name>FMN</name>
        <dbReference type="ChEBI" id="CHEBI:58210"/>
    </ligand>
</feature>
<evidence type="ECO:0000250" key="1"/>
<evidence type="ECO:0000305" key="2"/>
<keyword id="KW-0963">Cytoplasm</keyword>
<keyword id="KW-0285">Flavoprotein</keyword>
<keyword id="KW-0288">FMN</keyword>
<keyword id="KW-0520">NAD</keyword>
<keyword id="KW-0560">Oxidoreductase</keyword>
<keyword id="KW-0665">Pyrimidine biosynthesis</keyword>
<sequence length="309" mass="32990">MNRLQVELPGLSLKNPIIPASGCFGFGREYAQFYDLSVLGSIMIKATTEQPRYGNPTPRVAETPGGMLNAIGLQNPGLEKVMNSELPWLEQFDLPIIANVAGSQAEDYVAVAKEISKAPNVHALELNISCPNVKTGGIAFGTNPEIAADLTKRVKEVSEVPVYVKLSPNVANIVEIAKAIENAGADGLTMINTLLGMRLDLKTAKPILANRTGGLSGPAIKPVAIRMVHEVSQAVNIPIIGMGGIETAEDVIEFFYAGASAVAVGTANFIDPFVCPTIIEELPALLDELGFDHISECQGRSWKQTCHSR</sequence>
<organism>
    <name type="scientific">Bacillus anthracis (strain CDC 684 / NRRL 3495)</name>
    <dbReference type="NCBI Taxonomy" id="568206"/>
    <lineage>
        <taxon>Bacteria</taxon>
        <taxon>Bacillati</taxon>
        <taxon>Bacillota</taxon>
        <taxon>Bacilli</taxon>
        <taxon>Bacillales</taxon>
        <taxon>Bacillaceae</taxon>
        <taxon>Bacillus</taxon>
        <taxon>Bacillus cereus group</taxon>
    </lineage>
</organism>
<name>PYRDB_BACAC</name>
<dbReference type="EC" id="1.3.1.14"/>
<dbReference type="EMBL" id="CP001215">
    <property type="protein sequence ID" value="ACP14622.1"/>
    <property type="molecule type" value="Genomic_DNA"/>
</dbReference>
<dbReference type="RefSeq" id="WP_001081057.1">
    <property type="nucleotide sequence ID" value="NC_012581.1"/>
</dbReference>
<dbReference type="SMR" id="C3L742"/>
<dbReference type="GeneID" id="83637592"/>
<dbReference type="KEGG" id="bah:BAMEG_0608"/>
<dbReference type="HOGENOM" id="CLU_042042_0_0_9"/>
<dbReference type="UniPathway" id="UPA00070">
    <property type="reaction ID" value="UER00945"/>
</dbReference>
<dbReference type="GO" id="GO:0005737">
    <property type="term" value="C:cytoplasm"/>
    <property type="evidence" value="ECO:0007669"/>
    <property type="project" value="UniProtKB-SubCell"/>
</dbReference>
<dbReference type="GO" id="GO:0004589">
    <property type="term" value="F:dihydroorotate dehydrogenase (NAD+) activity"/>
    <property type="evidence" value="ECO:0007669"/>
    <property type="project" value="UniProtKB-EC"/>
</dbReference>
<dbReference type="GO" id="GO:0006207">
    <property type="term" value="P:'de novo' pyrimidine nucleobase biosynthetic process"/>
    <property type="evidence" value="ECO:0007669"/>
    <property type="project" value="InterPro"/>
</dbReference>
<dbReference type="GO" id="GO:0044205">
    <property type="term" value="P:'de novo' UMP biosynthetic process"/>
    <property type="evidence" value="ECO:0007669"/>
    <property type="project" value="UniProtKB-UniRule"/>
</dbReference>
<dbReference type="CDD" id="cd04740">
    <property type="entry name" value="DHOD_1B_like"/>
    <property type="match status" value="1"/>
</dbReference>
<dbReference type="FunFam" id="3.20.20.70:FF:000069">
    <property type="entry name" value="Dihydroorotate dehydrogenase"/>
    <property type="match status" value="1"/>
</dbReference>
<dbReference type="Gene3D" id="3.20.20.70">
    <property type="entry name" value="Aldolase class I"/>
    <property type="match status" value="1"/>
</dbReference>
<dbReference type="HAMAP" id="MF_00224">
    <property type="entry name" value="DHO_dh_type1"/>
    <property type="match status" value="1"/>
</dbReference>
<dbReference type="InterPro" id="IPR013785">
    <property type="entry name" value="Aldolase_TIM"/>
</dbReference>
<dbReference type="InterPro" id="IPR050074">
    <property type="entry name" value="DHO_dehydrogenase"/>
</dbReference>
<dbReference type="InterPro" id="IPR033888">
    <property type="entry name" value="DHOD_1B"/>
</dbReference>
<dbReference type="InterPro" id="IPR024920">
    <property type="entry name" value="Dihydroorotate_DH_1"/>
</dbReference>
<dbReference type="InterPro" id="IPR012135">
    <property type="entry name" value="Dihydroorotate_DH_1_2"/>
</dbReference>
<dbReference type="InterPro" id="IPR005720">
    <property type="entry name" value="Dihydroorotate_DH_cat"/>
</dbReference>
<dbReference type="InterPro" id="IPR001295">
    <property type="entry name" value="Dihydroorotate_DH_CS"/>
</dbReference>
<dbReference type="InterPro" id="IPR049622">
    <property type="entry name" value="Dihydroorotate_DH_I"/>
</dbReference>
<dbReference type="NCBIfam" id="NF005574">
    <property type="entry name" value="PRK07259.1"/>
    <property type="match status" value="1"/>
</dbReference>
<dbReference type="NCBIfam" id="TIGR01037">
    <property type="entry name" value="pyrD_sub1_fam"/>
    <property type="match status" value="1"/>
</dbReference>
<dbReference type="PANTHER" id="PTHR48109:SF1">
    <property type="entry name" value="DIHYDROOROTATE DEHYDROGENASE (FUMARATE)"/>
    <property type="match status" value="1"/>
</dbReference>
<dbReference type="PANTHER" id="PTHR48109">
    <property type="entry name" value="DIHYDROOROTATE DEHYDROGENASE (QUINONE), MITOCHONDRIAL-RELATED"/>
    <property type="match status" value="1"/>
</dbReference>
<dbReference type="Pfam" id="PF01180">
    <property type="entry name" value="DHO_dh"/>
    <property type="match status" value="1"/>
</dbReference>
<dbReference type="PIRSF" id="PIRSF000164">
    <property type="entry name" value="DHO_oxidase"/>
    <property type="match status" value="1"/>
</dbReference>
<dbReference type="SUPFAM" id="SSF51395">
    <property type="entry name" value="FMN-linked oxidoreductases"/>
    <property type="match status" value="1"/>
</dbReference>
<dbReference type="PROSITE" id="PS00911">
    <property type="entry name" value="DHODEHASE_1"/>
    <property type="match status" value="1"/>
</dbReference>
<dbReference type="PROSITE" id="PS00912">
    <property type="entry name" value="DHODEHASE_2"/>
    <property type="match status" value="1"/>
</dbReference>
<comment type="function">
    <text evidence="1">Catalyzes the conversion of dihydroorotate to orotate with NAD(+) as electron acceptor.</text>
</comment>
<comment type="catalytic activity">
    <reaction>
        <text>(S)-dihydroorotate + NAD(+) = orotate + NADH + H(+)</text>
        <dbReference type="Rhea" id="RHEA:13513"/>
        <dbReference type="ChEBI" id="CHEBI:15378"/>
        <dbReference type="ChEBI" id="CHEBI:30839"/>
        <dbReference type="ChEBI" id="CHEBI:30864"/>
        <dbReference type="ChEBI" id="CHEBI:57540"/>
        <dbReference type="ChEBI" id="CHEBI:57945"/>
        <dbReference type="EC" id="1.3.1.14"/>
    </reaction>
</comment>
<comment type="cofactor">
    <cofactor evidence="1">
        <name>FMN</name>
        <dbReference type="ChEBI" id="CHEBI:58210"/>
    </cofactor>
    <text evidence="1">Binds 1 FMN per subunit.</text>
</comment>
<comment type="pathway">
    <text>Pyrimidine metabolism; UMP biosynthesis via de novo pathway; orotate from (S)-dihydroorotate (NAD(+) route): step 1/1.</text>
</comment>
<comment type="subunit">
    <text evidence="1">Heterotetramer of 2 PyrK and 2 PyrD type B subunits.</text>
</comment>
<comment type="subcellular location">
    <subcellularLocation>
        <location evidence="1">Cytoplasm</location>
    </subcellularLocation>
</comment>
<comment type="similarity">
    <text evidence="2">Belongs to the dihydroorotate dehydrogenase family. Type 1 subfamily.</text>
</comment>
<protein>
    <recommendedName>
        <fullName>Dihydroorotate dehydrogenase B (NAD(+)), catalytic subunit</fullName>
        <shortName>DHOD B</shortName>
        <shortName>DHODase B</shortName>
        <shortName>DHOdehase B</shortName>
        <ecNumber>1.3.1.14</ecNumber>
    </recommendedName>
    <alternativeName>
        <fullName>Dihydroorotate oxidase B</fullName>
    </alternativeName>
    <alternativeName>
        <fullName>Orotate reductase (NADH)</fullName>
    </alternativeName>
</protein>
<reference key="1">
    <citation type="submission" date="2008-10" db="EMBL/GenBank/DDBJ databases">
        <title>Genome sequence of Bacillus anthracis str. CDC 684.</title>
        <authorList>
            <person name="Dodson R.J."/>
            <person name="Munk A.C."/>
            <person name="Brettin T."/>
            <person name="Bruce D."/>
            <person name="Detter C."/>
            <person name="Tapia R."/>
            <person name="Han C."/>
            <person name="Sutton G."/>
            <person name="Sims D."/>
        </authorList>
    </citation>
    <scope>NUCLEOTIDE SEQUENCE [LARGE SCALE GENOMIC DNA]</scope>
    <source>
        <strain>CDC 684 / NRRL 3495</strain>
    </source>
</reference>